<dbReference type="EMBL" id="AP008937">
    <property type="protein sequence ID" value="BAG27171.1"/>
    <property type="molecule type" value="Genomic_DNA"/>
</dbReference>
<dbReference type="RefSeq" id="WP_003684990.1">
    <property type="nucleotide sequence ID" value="NC_010610.1"/>
</dbReference>
<dbReference type="SMR" id="B2GBY9"/>
<dbReference type="GeneID" id="83714780"/>
<dbReference type="KEGG" id="lfe:LAF_0835"/>
<dbReference type="eggNOG" id="COG0828">
    <property type="taxonomic scope" value="Bacteria"/>
</dbReference>
<dbReference type="HOGENOM" id="CLU_159258_3_2_9"/>
<dbReference type="Proteomes" id="UP000001697">
    <property type="component" value="Chromosome"/>
</dbReference>
<dbReference type="GO" id="GO:1990904">
    <property type="term" value="C:ribonucleoprotein complex"/>
    <property type="evidence" value="ECO:0007669"/>
    <property type="project" value="UniProtKB-KW"/>
</dbReference>
<dbReference type="GO" id="GO:0005840">
    <property type="term" value="C:ribosome"/>
    <property type="evidence" value="ECO:0007669"/>
    <property type="project" value="UniProtKB-KW"/>
</dbReference>
<dbReference type="GO" id="GO:0003735">
    <property type="term" value="F:structural constituent of ribosome"/>
    <property type="evidence" value="ECO:0007669"/>
    <property type="project" value="InterPro"/>
</dbReference>
<dbReference type="GO" id="GO:0006412">
    <property type="term" value="P:translation"/>
    <property type="evidence" value="ECO:0007669"/>
    <property type="project" value="UniProtKB-UniRule"/>
</dbReference>
<dbReference type="Gene3D" id="1.20.5.1150">
    <property type="entry name" value="Ribosomal protein S8"/>
    <property type="match status" value="1"/>
</dbReference>
<dbReference type="HAMAP" id="MF_00358">
    <property type="entry name" value="Ribosomal_bS21"/>
    <property type="match status" value="1"/>
</dbReference>
<dbReference type="InterPro" id="IPR001911">
    <property type="entry name" value="Ribosomal_bS21"/>
</dbReference>
<dbReference type="InterPro" id="IPR018278">
    <property type="entry name" value="Ribosomal_bS21_CS"/>
</dbReference>
<dbReference type="InterPro" id="IPR038380">
    <property type="entry name" value="Ribosomal_bS21_sf"/>
</dbReference>
<dbReference type="NCBIfam" id="TIGR00030">
    <property type="entry name" value="S21p"/>
    <property type="match status" value="1"/>
</dbReference>
<dbReference type="PANTHER" id="PTHR21109">
    <property type="entry name" value="MITOCHONDRIAL 28S RIBOSOMAL PROTEIN S21"/>
    <property type="match status" value="1"/>
</dbReference>
<dbReference type="PANTHER" id="PTHR21109:SF22">
    <property type="entry name" value="SMALL RIBOSOMAL SUBUNIT PROTEIN BS21"/>
    <property type="match status" value="1"/>
</dbReference>
<dbReference type="Pfam" id="PF01165">
    <property type="entry name" value="Ribosomal_S21"/>
    <property type="match status" value="1"/>
</dbReference>
<dbReference type="PRINTS" id="PR00976">
    <property type="entry name" value="RIBOSOMALS21"/>
</dbReference>
<dbReference type="PROSITE" id="PS01181">
    <property type="entry name" value="RIBOSOMAL_S21"/>
    <property type="match status" value="1"/>
</dbReference>
<reference key="1">
    <citation type="journal article" date="2008" name="DNA Res.">
        <title>Comparative genome analysis of Lactobacillus reuteri and Lactobacillus fermentum reveal a genomic island for reuterin and cobalamin production.</title>
        <authorList>
            <person name="Morita H."/>
            <person name="Toh H."/>
            <person name="Fukuda S."/>
            <person name="Horikawa H."/>
            <person name="Oshima K."/>
            <person name="Suzuki T."/>
            <person name="Murakami M."/>
            <person name="Hisamatsu S."/>
            <person name="Kato Y."/>
            <person name="Takizawa T."/>
            <person name="Fukuoka H."/>
            <person name="Yoshimura T."/>
            <person name="Itoh K."/>
            <person name="O'Sullivan D.J."/>
            <person name="McKay L.L."/>
            <person name="Ohno H."/>
            <person name="Kikuchi J."/>
            <person name="Masaoka T."/>
            <person name="Hattori M."/>
        </authorList>
    </citation>
    <scope>NUCLEOTIDE SEQUENCE [LARGE SCALE GENOMIC DNA]</scope>
    <source>
        <strain>NBRC 3956 / LMG 18251</strain>
    </source>
</reference>
<sequence>MSKTIVRKNESLDDALRRFKRTVSRNGTLQEYRKREFYEKPSVKRKLKSEAARKRKNKRRRY</sequence>
<name>RS21_LIMF3</name>
<accession>B2GBY9</accession>
<proteinExistence type="inferred from homology"/>
<keyword id="KW-1185">Reference proteome</keyword>
<keyword id="KW-0687">Ribonucleoprotein</keyword>
<keyword id="KW-0689">Ribosomal protein</keyword>
<organism>
    <name type="scientific">Limosilactobacillus fermentum (strain NBRC 3956 / LMG 18251)</name>
    <name type="common">Lactobacillus fermentum</name>
    <dbReference type="NCBI Taxonomy" id="334390"/>
    <lineage>
        <taxon>Bacteria</taxon>
        <taxon>Bacillati</taxon>
        <taxon>Bacillota</taxon>
        <taxon>Bacilli</taxon>
        <taxon>Lactobacillales</taxon>
        <taxon>Lactobacillaceae</taxon>
        <taxon>Limosilactobacillus</taxon>
    </lineage>
</organism>
<comment type="similarity">
    <text evidence="1">Belongs to the bacterial ribosomal protein bS21 family.</text>
</comment>
<feature type="chain" id="PRO_1000120633" description="Small ribosomal subunit protein bS21">
    <location>
        <begin position="1"/>
        <end position="62"/>
    </location>
</feature>
<feature type="region of interest" description="Disordered" evidence="2">
    <location>
        <begin position="40"/>
        <end position="62"/>
    </location>
</feature>
<feature type="compositionally biased region" description="Basic and acidic residues" evidence="2">
    <location>
        <begin position="40"/>
        <end position="52"/>
    </location>
</feature>
<feature type="compositionally biased region" description="Basic residues" evidence="2">
    <location>
        <begin position="53"/>
        <end position="62"/>
    </location>
</feature>
<protein>
    <recommendedName>
        <fullName evidence="1">Small ribosomal subunit protein bS21</fullName>
    </recommendedName>
    <alternativeName>
        <fullName evidence="3">30S ribosomal protein S21</fullName>
    </alternativeName>
</protein>
<gene>
    <name evidence="1" type="primary">rpsU</name>
    <name type="ordered locus">LAF_0835</name>
</gene>
<evidence type="ECO:0000255" key="1">
    <source>
        <dbReference type="HAMAP-Rule" id="MF_00358"/>
    </source>
</evidence>
<evidence type="ECO:0000256" key="2">
    <source>
        <dbReference type="SAM" id="MobiDB-lite"/>
    </source>
</evidence>
<evidence type="ECO:0000305" key="3"/>